<organism>
    <name type="scientific">Burkholderia pseudomallei (strain 668)</name>
    <dbReference type="NCBI Taxonomy" id="320373"/>
    <lineage>
        <taxon>Bacteria</taxon>
        <taxon>Pseudomonadati</taxon>
        <taxon>Pseudomonadota</taxon>
        <taxon>Betaproteobacteria</taxon>
        <taxon>Burkholderiales</taxon>
        <taxon>Burkholderiaceae</taxon>
        <taxon>Burkholderia</taxon>
        <taxon>pseudomallei group</taxon>
    </lineage>
</organism>
<name>DAPE_BURP6</name>
<comment type="function">
    <text evidence="1">Catalyzes the hydrolysis of N-succinyl-L,L-diaminopimelic acid (SDAP), forming succinate and LL-2,6-diaminopimelate (DAP), an intermediate involved in the bacterial biosynthesis of lysine and meso-diaminopimelic acid, an essential component of bacterial cell walls.</text>
</comment>
<comment type="catalytic activity">
    <reaction evidence="1">
        <text>N-succinyl-(2S,6S)-2,6-diaminopimelate + H2O = (2S,6S)-2,6-diaminopimelate + succinate</text>
        <dbReference type="Rhea" id="RHEA:22608"/>
        <dbReference type="ChEBI" id="CHEBI:15377"/>
        <dbReference type="ChEBI" id="CHEBI:30031"/>
        <dbReference type="ChEBI" id="CHEBI:57609"/>
        <dbReference type="ChEBI" id="CHEBI:58087"/>
        <dbReference type="EC" id="3.5.1.18"/>
    </reaction>
</comment>
<comment type="cofactor">
    <cofactor evidence="1">
        <name>Zn(2+)</name>
        <dbReference type="ChEBI" id="CHEBI:29105"/>
    </cofactor>
    <cofactor evidence="1">
        <name>Co(2+)</name>
        <dbReference type="ChEBI" id="CHEBI:48828"/>
    </cofactor>
    <text evidence="1">Binds 2 Zn(2+) or Co(2+) ions per subunit.</text>
</comment>
<comment type="pathway">
    <text evidence="1">Amino-acid biosynthesis; L-lysine biosynthesis via DAP pathway; LL-2,6-diaminopimelate from (S)-tetrahydrodipicolinate (succinylase route): step 3/3.</text>
</comment>
<comment type="subunit">
    <text evidence="1">Homodimer.</text>
</comment>
<comment type="similarity">
    <text evidence="1">Belongs to the peptidase M20A family. DapE subfamily.</text>
</comment>
<feature type="chain" id="PRO_0000375511" description="Succinyl-diaminopimelate desuccinylase">
    <location>
        <begin position="1"/>
        <end position="379"/>
    </location>
</feature>
<feature type="active site" evidence="1">
    <location>
        <position position="72"/>
    </location>
</feature>
<feature type="active site" description="Proton acceptor" evidence="1">
    <location>
        <position position="137"/>
    </location>
</feature>
<feature type="binding site" evidence="1">
    <location>
        <position position="70"/>
    </location>
    <ligand>
        <name>Zn(2+)</name>
        <dbReference type="ChEBI" id="CHEBI:29105"/>
        <label>1</label>
    </ligand>
</feature>
<feature type="binding site" evidence="1">
    <location>
        <position position="103"/>
    </location>
    <ligand>
        <name>Zn(2+)</name>
        <dbReference type="ChEBI" id="CHEBI:29105"/>
        <label>1</label>
    </ligand>
</feature>
<feature type="binding site" evidence="1">
    <location>
        <position position="103"/>
    </location>
    <ligand>
        <name>Zn(2+)</name>
        <dbReference type="ChEBI" id="CHEBI:29105"/>
        <label>2</label>
    </ligand>
</feature>
<feature type="binding site" evidence="1">
    <location>
        <position position="138"/>
    </location>
    <ligand>
        <name>Zn(2+)</name>
        <dbReference type="ChEBI" id="CHEBI:29105"/>
        <label>2</label>
    </ligand>
</feature>
<feature type="binding site" evidence="1">
    <location>
        <position position="166"/>
    </location>
    <ligand>
        <name>Zn(2+)</name>
        <dbReference type="ChEBI" id="CHEBI:29105"/>
        <label>1</label>
    </ligand>
</feature>
<feature type="binding site" evidence="1">
    <location>
        <position position="352"/>
    </location>
    <ligand>
        <name>Zn(2+)</name>
        <dbReference type="ChEBI" id="CHEBI:29105"/>
        <label>2</label>
    </ligand>
</feature>
<protein>
    <recommendedName>
        <fullName evidence="1">Succinyl-diaminopimelate desuccinylase</fullName>
        <shortName evidence="1">SDAP desuccinylase</shortName>
        <ecNumber evidence="1">3.5.1.18</ecNumber>
    </recommendedName>
    <alternativeName>
        <fullName evidence="1">N-succinyl-LL-2,6-diaminoheptanedioate amidohydrolase</fullName>
    </alternativeName>
</protein>
<proteinExistence type="inferred from homology"/>
<reference key="1">
    <citation type="journal article" date="2010" name="Genome Biol. Evol.">
        <title>Continuing evolution of Burkholderia mallei through genome reduction and large-scale rearrangements.</title>
        <authorList>
            <person name="Losada L."/>
            <person name="Ronning C.M."/>
            <person name="DeShazer D."/>
            <person name="Woods D."/>
            <person name="Fedorova N."/>
            <person name="Kim H.S."/>
            <person name="Shabalina S.A."/>
            <person name="Pearson T.R."/>
            <person name="Brinkac L."/>
            <person name="Tan P."/>
            <person name="Nandi T."/>
            <person name="Crabtree J."/>
            <person name="Badger J."/>
            <person name="Beckstrom-Sternberg S."/>
            <person name="Saqib M."/>
            <person name="Schutzer S.E."/>
            <person name="Keim P."/>
            <person name="Nierman W.C."/>
        </authorList>
    </citation>
    <scope>NUCLEOTIDE SEQUENCE [LARGE SCALE GENOMIC DNA]</scope>
    <source>
        <strain>668</strain>
    </source>
</reference>
<evidence type="ECO:0000255" key="1">
    <source>
        <dbReference type="HAMAP-Rule" id="MF_01690"/>
    </source>
</evidence>
<sequence>MSATLALTEQLIARASVTPDDQHCQQLMIERLAALGFECETIASHGVTNFWAVKRGTAGRAGKLLAFAGHTDVVPTGPLEQWSSPPFVPTHRDGKLYGRGAADMKTSLAGFVVAAEEFVAAHPQHRGSIGFLITSDEEGPATDGTVKVVEALAARGERLDYCIVGEPTSTATLGDVVKNGRRGSMSGELVVKGVQGHIAYPHLAKNPIHLLAPALAELAAEQWDEGNEYFPPTTWQVSNLRAGTGATNVIPGHADLLFNFRFSTASTVEGLQARVHAILDRHGLDYTLNWSVSGLPFLTPRGELSNALDAAIRAETGVSPELSTTGGTSDGRFIARICPQVIEFGPPNASIHKIDEHIDVRFVDPLKNVYRRVLEQLIA</sequence>
<accession>A3NAW2</accession>
<gene>
    <name evidence="1" type="primary">dapE</name>
    <name type="ordered locus">BURPS668_2451</name>
</gene>
<dbReference type="EC" id="3.5.1.18" evidence="1"/>
<dbReference type="EMBL" id="CP000570">
    <property type="protein sequence ID" value="ABN83440.1"/>
    <property type="molecule type" value="Genomic_DNA"/>
</dbReference>
<dbReference type="RefSeq" id="WP_004521179.1">
    <property type="nucleotide sequence ID" value="NC_009074.1"/>
</dbReference>
<dbReference type="SMR" id="A3NAW2"/>
<dbReference type="GeneID" id="93060712"/>
<dbReference type="KEGG" id="bpd:BURPS668_2451"/>
<dbReference type="HOGENOM" id="CLU_021802_4_0_4"/>
<dbReference type="UniPathway" id="UPA00034">
    <property type="reaction ID" value="UER00021"/>
</dbReference>
<dbReference type="GO" id="GO:0008777">
    <property type="term" value="F:acetylornithine deacetylase activity"/>
    <property type="evidence" value="ECO:0007669"/>
    <property type="project" value="TreeGrafter"/>
</dbReference>
<dbReference type="GO" id="GO:0050897">
    <property type="term" value="F:cobalt ion binding"/>
    <property type="evidence" value="ECO:0007669"/>
    <property type="project" value="UniProtKB-UniRule"/>
</dbReference>
<dbReference type="GO" id="GO:0009014">
    <property type="term" value="F:succinyl-diaminopimelate desuccinylase activity"/>
    <property type="evidence" value="ECO:0007669"/>
    <property type="project" value="UniProtKB-UniRule"/>
</dbReference>
<dbReference type="GO" id="GO:0008270">
    <property type="term" value="F:zinc ion binding"/>
    <property type="evidence" value="ECO:0007669"/>
    <property type="project" value="UniProtKB-UniRule"/>
</dbReference>
<dbReference type="GO" id="GO:0019877">
    <property type="term" value="P:diaminopimelate biosynthetic process"/>
    <property type="evidence" value="ECO:0007669"/>
    <property type="project" value="UniProtKB-UniRule"/>
</dbReference>
<dbReference type="GO" id="GO:0006526">
    <property type="term" value="P:L-arginine biosynthetic process"/>
    <property type="evidence" value="ECO:0007669"/>
    <property type="project" value="TreeGrafter"/>
</dbReference>
<dbReference type="GO" id="GO:0009089">
    <property type="term" value="P:lysine biosynthetic process via diaminopimelate"/>
    <property type="evidence" value="ECO:0007669"/>
    <property type="project" value="UniProtKB-UniRule"/>
</dbReference>
<dbReference type="CDD" id="cd03891">
    <property type="entry name" value="M20_DapE_proteobac"/>
    <property type="match status" value="1"/>
</dbReference>
<dbReference type="FunFam" id="3.30.70.360:FF:000011">
    <property type="entry name" value="Succinyl-diaminopimelate desuccinylase"/>
    <property type="match status" value="1"/>
</dbReference>
<dbReference type="FunFam" id="3.40.630.10:FF:000005">
    <property type="entry name" value="Succinyl-diaminopimelate desuccinylase"/>
    <property type="match status" value="1"/>
</dbReference>
<dbReference type="Gene3D" id="3.40.630.10">
    <property type="entry name" value="Zn peptidases"/>
    <property type="match status" value="2"/>
</dbReference>
<dbReference type="HAMAP" id="MF_01690">
    <property type="entry name" value="DapE"/>
    <property type="match status" value="1"/>
</dbReference>
<dbReference type="InterPro" id="IPR001261">
    <property type="entry name" value="ArgE/DapE_CS"/>
</dbReference>
<dbReference type="InterPro" id="IPR036264">
    <property type="entry name" value="Bact_exopeptidase_dim_dom"/>
</dbReference>
<dbReference type="InterPro" id="IPR005941">
    <property type="entry name" value="DapE_proteobac"/>
</dbReference>
<dbReference type="InterPro" id="IPR002933">
    <property type="entry name" value="Peptidase_M20"/>
</dbReference>
<dbReference type="InterPro" id="IPR011650">
    <property type="entry name" value="Peptidase_M20_dimer"/>
</dbReference>
<dbReference type="InterPro" id="IPR050072">
    <property type="entry name" value="Peptidase_M20A"/>
</dbReference>
<dbReference type="NCBIfam" id="TIGR01246">
    <property type="entry name" value="dapE_proteo"/>
    <property type="match status" value="1"/>
</dbReference>
<dbReference type="NCBIfam" id="NF009557">
    <property type="entry name" value="PRK13009.1"/>
    <property type="match status" value="1"/>
</dbReference>
<dbReference type="PANTHER" id="PTHR43808">
    <property type="entry name" value="ACETYLORNITHINE DEACETYLASE"/>
    <property type="match status" value="1"/>
</dbReference>
<dbReference type="PANTHER" id="PTHR43808:SF31">
    <property type="entry name" value="N-ACETYL-L-CITRULLINE DEACETYLASE"/>
    <property type="match status" value="1"/>
</dbReference>
<dbReference type="Pfam" id="PF07687">
    <property type="entry name" value="M20_dimer"/>
    <property type="match status" value="1"/>
</dbReference>
<dbReference type="Pfam" id="PF01546">
    <property type="entry name" value="Peptidase_M20"/>
    <property type="match status" value="1"/>
</dbReference>
<dbReference type="SUPFAM" id="SSF55031">
    <property type="entry name" value="Bacterial exopeptidase dimerisation domain"/>
    <property type="match status" value="1"/>
</dbReference>
<dbReference type="SUPFAM" id="SSF53187">
    <property type="entry name" value="Zn-dependent exopeptidases"/>
    <property type="match status" value="1"/>
</dbReference>
<dbReference type="PROSITE" id="PS00758">
    <property type="entry name" value="ARGE_DAPE_CPG2_1"/>
    <property type="match status" value="1"/>
</dbReference>
<keyword id="KW-0028">Amino-acid biosynthesis</keyword>
<keyword id="KW-0170">Cobalt</keyword>
<keyword id="KW-0220">Diaminopimelate biosynthesis</keyword>
<keyword id="KW-0378">Hydrolase</keyword>
<keyword id="KW-0457">Lysine biosynthesis</keyword>
<keyword id="KW-0479">Metal-binding</keyword>
<keyword id="KW-0862">Zinc</keyword>